<sequence>MAKAKFERTKAHVNIGTIGHVDHGKTTLTAAISKVLYDKYPDLNEARDFATIDSAPEERQRGITINISHVEYQTEKRHYAHVDAPGHADYIKNMITGAAQMDGAILVVAATDGPMAQTREHVLLARQVGVPALLVALNKSDMVEDEELLERVEMEVRQLLSSRSFDVDEAPVIRTSALKALEGDPQWVKSVEDLMDAVDEYIPDPVRDKDKPFLMPIEDVFTITGRGTVVTGRAERGTLKINSEVEIVGIRDVQKTTVTGIEMFHKQLDEAWAGENCGLLVRGLKRDDVERGQVLVEPGSITPHTNFEANVYILSKDEGGRHTPFYSNYRAQFYFRTTDVTGVITLPEGTEMVMPGDTTEMSVELIQPIAMEEGLGFAIREGGRTVGSGRVTKITK</sequence>
<keyword id="KW-0963">Cytoplasm</keyword>
<keyword id="KW-0251">Elongation factor</keyword>
<keyword id="KW-0342">GTP-binding</keyword>
<keyword id="KW-0378">Hydrolase</keyword>
<keyword id="KW-0460">Magnesium</keyword>
<keyword id="KW-0479">Metal-binding</keyword>
<keyword id="KW-0547">Nucleotide-binding</keyword>
<keyword id="KW-0648">Protein biosynthesis</keyword>
<accession>P09953</accession>
<reference key="1">
    <citation type="journal article" date="1987" name="J. Bacteriol.">
        <title>Organization and codon usage of the streptomycin operon in Micrococcus luteus, a bacterium with a high genomic G + C content.</title>
        <authorList>
            <person name="Ohama T."/>
            <person name="Yamao F."/>
            <person name="Muto A."/>
            <person name="Osawa S."/>
        </authorList>
    </citation>
    <scope>NUCLEOTIDE SEQUENCE [GENOMIC DNA]</scope>
</reference>
<feature type="chain" id="PRO_0000091344" description="Elongation factor Tu">
    <location>
        <begin position="1"/>
        <end position="396"/>
    </location>
</feature>
<feature type="domain" description="tr-type G">
    <location>
        <begin position="10"/>
        <end position="206"/>
    </location>
</feature>
<feature type="region of interest" description="G1" evidence="1">
    <location>
        <begin position="19"/>
        <end position="26"/>
    </location>
</feature>
<feature type="region of interest" description="G2" evidence="1">
    <location>
        <begin position="62"/>
        <end position="66"/>
    </location>
</feature>
<feature type="region of interest" description="G3" evidence="1">
    <location>
        <begin position="83"/>
        <end position="86"/>
    </location>
</feature>
<feature type="region of interest" description="G4" evidence="1">
    <location>
        <begin position="138"/>
        <end position="141"/>
    </location>
</feature>
<feature type="region of interest" description="G5" evidence="1">
    <location>
        <begin position="176"/>
        <end position="178"/>
    </location>
</feature>
<feature type="binding site" evidence="2">
    <location>
        <begin position="19"/>
        <end position="26"/>
    </location>
    <ligand>
        <name>GTP</name>
        <dbReference type="ChEBI" id="CHEBI:37565"/>
    </ligand>
</feature>
<feature type="binding site" evidence="2">
    <location>
        <position position="26"/>
    </location>
    <ligand>
        <name>Mg(2+)</name>
        <dbReference type="ChEBI" id="CHEBI:18420"/>
    </ligand>
</feature>
<feature type="binding site" evidence="2">
    <location>
        <begin position="83"/>
        <end position="87"/>
    </location>
    <ligand>
        <name>GTP</name>
        <dbReference type="ChEBI" id="CHEBI:37565"/>
    </ligand>
</feature>
<feature type="binding site" evidence="2">
    <location>
        <begin position="138"/>
        <end position="141"/>
    </location>
    <ligand>
        <name>GTP</name>
        <dbReference type="ChEBI" id="CHEBI:37565"/>
    </ligand>
</feature>
<gene>
    <name evidence="2" type="primary">tuf</name>
    <name type="synonym">tufA</name>
</gene>
<evidence type="ECO:0000250" key="1"/>
<evidence type="ECO:0000255" key="2">
    <source>
        <dbReference type="HAMAP-Rule" id="MF_00118"/>
    </source>
</evidence>
<organism>
    <name type="scientific">Micrococcus luteus</name>
    <name type="common">Micrococcus lysodeikticus</name>
    <dbReference type="NCBI Taxonomy" id="1270"/>
    <lineage>
        <taxon>Bacteria</taxon>
        <taxon>Bacillati</taxon>
        <taxon>Actinomycetota</taxon>
        <taxon>Actinomycetes</taxon>
        <taxon>Micrococcales</taxon>
        <taxon>Micrococcaceae</taxon>
        <taxon>Micrococcus</taxon>
    </lineage>
</organism>
<dbReference type="EC" id="3.6.5.3" evidence="2"/>
<dbReference type="EMBL" id="M17788">
    <property type="protein sequence ID" value="AAA25320.1"/>
    <property type="molecule type" value="Genomic_DNA"/>
</dbReference>
<dbReference type="PIR" id="D26956">
    <property type="entry name" value="D26956"/>
</dbReference>
<dbReference type="SMR" id="P09953"/>
<dbReference type="STRING" id="1232675.GCA_000309825_02163"/>
<dbReference type="GO" id="GO:0005829">
    <property type="term" value="C:cytosol"/>
    <property type="evidence" value="ECO:0007669"/>
    <property type="project" value="TreeGrafter"/>
</dbReference>
<dbReference type="GO" id="GO:0005525">
    <property type="term" value="F:GTP binding"/>
    <property type="evidence" value="ECO:0007669"/>
    <property type="project" value="UniProtKB-UniRule"/>
</dbReference>
<dbReference type="GO" id="GO:0003924">
    <property type="term" value="F:GTPase activity"/>
    <property type="evidence" value="ECO:0007669"/>
    <property type="project" value="InterPro"/>
</dbReference>
<dbReference type="GO" id="GO:0003746">
    <property type="term" value="F:translation elongation factor activity"/>
    <property type="evidence" value="ECO:0007669"/>
    <property type="project" value="UniProtKB-UniRule"/>
</dbReference>
<dbReference type="CDD" id="cd01884">
    <property type="entry name" value="EF_Tu"/>
    <property type="match status" value="1"/>
</dbReference>
<dbReference type="CDD" id="cd03697">
    <property type="entry name" value="EFTU_II"/>
    <property type="match status" value="1"/>
</dbReference>
<dbReference type="CDD" id="cd03707">
    <property type="entry name" value="EFTU_III"/>
    <property type="match status" value="1"/>
</dbReference>
<dbReference type="FunFam" id="2.40.30.10:FF:000001">
    <property type="entry name" value="Elongation factor Tu"/>
    <property type="match status" value="1"/>
</dbReference>
<dbReference type="FunFam" id="3.40.50.300:FF:000003">
    <property type="entry name" value="Elongation factor Tu"/>
    <property type="match status" value="1"/>
</dbReference>
<dbReference type="Gene3D" id="3.40.50.300">
    <property type="entry name" value="P-loop containing nucleotide triphosphate hydrolases"/>
    <property type="match status" value="1"/>
</dbReference>
<dbReference type="Gene3D" id="2.40.30.10">
    <property type="entry name" value="Translation factors"/>
    <property type="match status" value="2"/>
</dbReference>
<dbReference type="HAMAP" id="MF_00118_B">
    <property type="entry name" value="EF_Tu_B"/>
    <property type="match status" value="1"/>
</dbReference>
<dbReference type="InterPro" id="IPR041709">
    <property type="entry name" value="EF-Tu_GTP-bd"/>
</dbReference>
<dbReference type="InterPro" id="IPR050055">
    <property type="entry name" value="EF-Tu_GTPase"/>
</dbReference>
<dbReference type="InterPro" id="IPR004161">
    <property type="entry name" value="EFTu-like_2"/>
</dbReference>
<dbReference type="InterPro" id="IPR033720">
    <property type="entry name" value="EFTU_2"/>
</dbReference>
<dbReference type="InterPro" id="IPR031157">
    <property type="entry name" value="G_TR_CS"/>
</dbReference>
<dbReference type="InterPro" id="IPR027417">
    <property type="entry name" value="P-loop_NTPase"/>
</dbReference>
<dbReference type="InterPro" id="IPR005225">
    <property type="entry name" value="Small_GTP-bd"/>
</dbReference>
<dbReference type="InterPro" id="IPR000795">
    <property type="entry name" value="T_Tr_GTP-bd_dom"/>
</dbReference>
<dbReference type="InterPro" id="IPR009000">
    <property type="entry name" value="Transl_B-barrel_sf"/>
</dbReference>
<dbReference type="InterPro" id="IPR009001">
    <property type="entry name" value="Transl_elong_EF1A/Init_IF2_C"/>
</dbReference>
<dbReference type="InterPro" id="IPR004541">
    <property type="entry name" value="Transl_elong_EFTu/EF1A_bac/org"/>
</dbReference>
<dbReference type="InterPro" id="IPR004160">
    <property type="entry name" value="Transl_elong_EFTu/EF1A_C"/>
</dbReference>
<dbReference type="NCBIfam" id="TIGR00485">
    <property type="entry name" value="EF-Tu"/>
    <property type="match status" value="1"/>
</dbReference>
<dbReference type="NCBIfam" id="NF000766">
    <property type="entry name" value="PRK00049.1"/>
    <property type="match status" value="1"/>
</dbReference>
<dbReference type="NCBIfam" id="NF009372">
    <property type="entry name" value="PRK12735.1"/>
    <property type="match status" value="1"/>
</dbReference>
<dbReference type="NCBIfam" id="NF009373">
    <property type="entry name" value="PRK12736.1"/>
    <property type="match status" value="1"/>
</dbReference>
<dbReference type="NCBIfam" id="TIGR00231">
    <property type="entry name" value="small_GTP"/>
    <property type="match status" value="1"/>
</dbReference>
<dbReference type="PANTHER" id="PTHR43721:SF22">
    <property type="entry name" value="ELONGATION FACTOR TU, MITOCHONDRIAL"/>
    <property type="match status" value="1"/>
</dbReference>
<dbReference type="PANTHER" id="PTHR43721">
    <property type="entry name" value="ELONGATION FACTOR TU-RELATED"/>
    <property type="match status" value="1"/>
</dbReference>
<dbReference type="Pfam" id="PF00009">
    <property type="entry name" value="GTP_EFTU"/>
    <property type="match status" value="1"/>
</dbReference>
<dbReference type="Pfam" id="PF03144">
    <property type="entry name" value="GTP_EFTU_D2"/>
    <property type="match status" value="1"/>
</dbReference>
<dbReference type="Pfam" id="PF03143">
    <property type="entry name" value="GTP_EFTU_D3"/>
    <property type="match status" value="1"/>
</dbReference>
<dbReference type="PRINTS" id="PR00315">
    <property type="entry name" value="ELONGATNFCT"/>
</dbReference>
<dbReference type="SUPFAM" id="SSF50465">
    <property type="entry name" value="EF-Tu/eEF-1alpha/eIF2-gamma C-terminal domain"/>
    <property type="match status" value="1"/>
</dbReference>
<dbReference type="SUPFAM" id="SSF52540">
    <property type="entry name" value="P-loop containing nucleoside triphosphate hydrolases"/>
    <property type="match status" value="1"/>
</dbReference>
<dbReference type="SUPFAM" id="SSF50447">
    <property type="entry name" value="Translation proteins"/>
    <property type="match status" value="1"/>
</dbReference>
<dbReference type="PROSITE" id="PS00301">
    <property type="entry name" value="G_TR_1"/>
    <property type="match status" value="1"/>
</dbReference>
<dbReference type="PROSITE" id="PS51722">
    <property type="entry name" value="G_TR_2"/>
    <property type="match status" value="1"/>
</dbReference>
<name>EFTU_MICLU</name>
<comment type="function">
    <text evidence="2">GTP hydrolase that promotes the GTP-dependent binding of aminoacyl-tRNA to the A-site of ribosomes during protein biosynthesis.</text>
</comment>
<comment type="catalytic activity">
    <reaction evidence="2">
        <text>GTP + H2O = GDP + phosphate + H(+)</text>
        <dbReference type="Rhea" id="RHEA:19669"/>
        <dbReference type="ChEBI" id="CHEBI:15377"/>
        <dbReference type="ChEBI" id="CHEBI:15378"/>
        <dbReference type="ChEBI" id="CHEBI:37565"/>
        <dbReference type="ChEBI" id="CHEBI:43474"/>
        <dbReference type="ChEBI" id="CHEBI:58189"/>
        <dbReference type="EC" id="3.6.5.3"/>
    </reaction>
    <physiologicalReaction direction="left-to-right" evidence="2">
        <dbReference type="Rhea" id="RHEA:19670"/>
    </physiologicalReaction>
</comment>
<comment type="subunit">
    <text evidence="2">Monomer.</text>
</comment>
<comment type="subcellular location">
    <subcellularLocation>
        <location evidence="2">Cytoplasm</location>
    </subcellularLocation>
</comment>
<comment type="similarity">
    <text evidence="2">Belongs to the TRAFAC class translation factor GTPase superfamily. Classic translation factor GTPase family. EF-Tu/EF-1A subfamily.</text>
</comment>
<proteinExistence type="inferred from homology"/>
<protein>
    <recommendedName>
        <fullName evidence="2">Elongation factor Tu</fullName>
        <shortName evidence="2">EF-Tu</shortName>
        <ecNumber evidence="2">3.6.5.3</ecNumber>
    </recommendedName>
</protein>